<dbReference type="EMBL" id="BT056568">
    <property type="protein sequence ID" value="ACM08440.1"/>
    <property type="molecule type" value="mRNA"/>
</dbReference>
<dbReference type="RefSeq" id="NP_001139876.1">
    <property type="nucleotide sequence ID" value="NM_001146404.2"/>
</dbReference>
<dbReference type="SMR" id="B9ELP3"/>
<dbReference type="STRING" id="8030.ENSSSAP00000067544"/>
<dbReference type="PaxDb" id="8030-ENSSSAP00000067544"/>
<dbReference type="Ensembl" id="ENSSSAT00020006410">
    <property type="protein sequence ID" value="ENSSSAP00020005840"/>
    <property type="gene ID" value="ENSSSAG00020002418"/>
</dbReference>
<dbReference type="Ensembl" id="ENSSSAT00070029215">
    <property type="protein sequence ID" value="ENSSSAP00070028001"/>
    <property type="gene ID" value="ENSSSAG00070018262"/>
</dbReference>
<dbReference type="GeneID" id="100286465"/>
<dbReference type="KEGG" id="sasa:100286465"/>
<dbReference type="CTD" id="257177"/>
<dbReference type="OrthoDB" id="460700at7898"/>
<dbReference type="Proteomes" id="UP000087266">
    <property type="component" value="Unplaced"/>
</dbReference>
<dbReference type="GO" id="GO:0016324">
    <property type="term" value="C:apical plasma membrane"/>
    <property type="evidence" value="ECO:0000250"/>
    <property type="project" value="UniProtKB"/>
</dbReference>
<dbReference type="GO" id="GO:0005879">
    <property type="term" value="C:axonemal microtubule"/>
    <property type="evidence" value="ECO:0000250"/>
    <property type="project" value="UniProtKB"/>
</dbReference>
<dbReference type="GO" id="GO:0036064">
    <property type="term" value="C:ciliary basal body"/>
    <property type="evidence" value="ECO:0000250"/>
    <property type="project" value="UniProtKB"/>
</dbReference>
<dbReference type="GO" id="GO:0005929">
    <property type="term" value="C:cilium"/>
    <property type="evidence" value="ECO:0000250"/>
    <property type="project" value="UniProtKB"/>
</dbReference>
<dbReference type="GO" id="GO:0044782">
    <property type="term" value="P:cilium organization"/>
    <property type="evidence" value="ECO:0000250"/>
    <property type="project" value="UniProtKB"/>
</dbReference>
<dbReference type="CDD" id="cd23705">
    <property type="entry name" value="Flattop"/>
    <property type="match status" value="1"/>
</dbReference>
<dbReference type="InterPro" id="IPR038797">
    <property type="entry name" value="Fltp"/>
</dbReference>
<dbReference type="PANTHER" id="PTHR34639">
    <property type="entry name" value="PROTEIN FLATTOP"/>
    <property type="match status" value="1"/>
</dbReference>
<dbReference type="PANTHER" id="PTHR34639:SF1">
    <property type="entry name" value="PROTEIN FLATTOP"/>
    <property type="match status" value="1"/>
</dbReference>
<dbReference type="Pfam" id="PF22611">
    <property type="entry name" value="CFAP126"/>
    <property type="match status" value="1"/>
</dbReference>
<reference key="1">
    <citation type="journal article" date="2010" name="BMC Genomics">
        <title>Salmo salar and Esox lucius full-length cDNA sequences reveal changes in evolutionary pressures on a post-tetraploidization genome.</title>
        <authorList>
            <person name="Leong J.S."/>
            <person name="Jantzen S.G."/>
            <person name="von Schalburg K.R."/>
            <person name="Cooper G.A."/>
            <person name="Messmer A.M."/>
            <person name="Liao N.Y."/>
            <person name="Munro S."/>
            <person name="Moore R."/>
            <person name="Holt R.A."/>
            <person name="Jones S.J."/>
            <person name="Davidson W.S."/>
            <person name="Koop B.F."/>
        </authorList>
    </citation>
    <scope>NUCLEOTIDE SEQUENCE [LARGE SCALE MRNA]</scope>
    <source>
        <tissue>Brain</tissue>
    </source>
</reference>
<proteinExistence type="evidence at transcript level"/>
<feature type="chain" id="PRO_0000371808" description="Protein Flattop">
    <location>
        <begin position="1"/>
        <end position="187"/>
    </location>
</feature>
<feature type="region of interest" description="Disordered" evidence="4">
    <location>
        <begin position="97"/>
        <end position="187"/>
    </location>
</feature>
<feature type="compositionally biased region" description="Polar residues" evidence="4">
    <location>
        <begin position="122"/>
        <end position="131"/>
    </location>
</feature>
<feature type="compositionally biased region" description="Basic and acidic residues" evidence="4">
    <location>
        <begin position="169"/>
        <end position="187"/>
    </location>
</feature>
<keyword id="KW-1003">Cell membrane</keyword>
<keyword id="KW-0966">Cell projection</keyword>
<keyword id="KW-0970">Cilium biogenesis/degradation</keyword>
<keyword id="KW-0963">Cytoplasm</keyword>
<keyword id="KW-0206">Cytoskeleton</keyword>
<keyword id="KW-0472">Membrane</keyword>
<keyword id="KW-1185">Reference proteome</keyword>
<accession>B9ELP3</accession>
<gene>
    <name evidence="3" type="primary">cfap126</name>
    <name evidence="3" type="synonym">fltp</name>
</gene>
<comment type="function">
    <text evidence="2 3">Microtubule inner protein (MIP) part of the dynein-decorated doublet microtubules (DMTs) in cilia axoneme. Acts as a regulator of cilium basal body docking and positioning in mono- and multiciliated cells. Regulates basal body docking and cilia formation in multiciliated lung cells. Regulates kinocilium positioning and stereocilia bundle morphogenesis in the inner ear.</text>
</comment>
<comment type="subcellular location">
    <subcellularLocation>
        <location evidence="3">Cytoplasm</location>
        <location evidence="3">Cytoskeleton</location>
        <location evidence="3">Cilium basal body</location>
    </subcellularLocation>
    <subcellularLocation>
        <location evidence="3">Cell projection</location>
        <location evidence="3">Cilium</location>
    </subcellularLocation>
    <subcellularLocation>
        <location evidence="3">Apical cell membrane</location>
    </subcellularLocation>
    <subcellularLocation>
        <location evidence="1">Cytoplasm</location>
        <location evidence="1">Cytoskeleton</location>
        <location evidence="1">Cilium axoneme</location>
    </subcellularLocation>
    <text evidence="1 3">Localizes to the apical cell membrane, the basal body and the primary cilium in monociliated node cells (By similarity).</text>
</comment>
<comment type="similarity">
    <text evidence="5">Belongs to the Flattop family.</text>
</comment>
<protein>
    <recommendedName>
        <fullName evidence="5">Protein Flattop</fullName>
    </recommendedName>
    <alternativeName>
        <fullName evidence="3">Cilia- and flagella-associated protein 126</fullName>
    </alternativeName>
</protein>
<evidence type="ECO:0000250" key="1">
    <source>
        <dbReference type="UniProtKB" id="Q3SZT6"/>
    </source>
</evidence>
<evidence type="ECO:0000250" key="2">
    <source>
        <dbReference type="UniProtKB" id="Q5VTH2"/>
    </source>
</evidence>
<evidence type="ECO:0000250" key="3">
    <source>
        <dbReference type="UniProtKB" id="Q6P8X9"/>
    </source>
</evidence>
<evidence type="ECO:0000256" key="4">
    <source>
        <dbReference type="SAM" id="MobiDB-lite"/>
    </source>
</evidence>
<evidence type="ECO:0000305" key="5"/>
<sequence length="187" mass="20661">MSSGYSANQYENAFNSQKLQNWTVPKHFKERPSAAQGHTIFIASDRGHLLPGVKAKRGSAWPDFKGTWELPAHLPPASINPTARSEEGRQRLTHTYTHSGHGIHTHRAAKTTAAPAADGQTEGDQTCNAPTSERPVTGERPVTGQSGRGERPLTQASEREQSLTLTYSKRREQSLEETPQLEREEPQ</sequence>
<name>FLTOP_SALSA</name>
<organism>
    <name type="scientific">Salmo salar</name>
    <name type="common">Atlantic salmon</name>
    <dbReference type="NCBI Taxonomy" id="8030"/>
    <lineage>
        <taxon>Eukaryota</taxon>
        <taxon>Metazoa</taxon>
        <taxon>Chordata</taxon>
        <taxon>Craniata</taxon>
        <taxon>Vertebrata</taxon>
        <taxon>Euteleostomi</taxon>
        <taxon>Actinopterygii</taxon>
        <taxon>Neopterygii</taxon>
        <taxon>Teleostei</taxon>
        <taxon>Protacanthopterygii</taxon>
        <taxon>Salmoniformes</taxon>
        <taxon>Salmonidae</taxon>
        <taxon>Salmoninae</taxon>
        <taxon>Salmo</taxon>
    </lineage>
</organism>